<proteinExistence type="inferred from homology"/>
<keyword id="KW-0004">4Fe-4S</keyword>
<keyword id="KW-0067">ATP-binding</keyword>
<keyword id="KW-0963">Cytoplasm</keyword>
<keyword id="KW-0408">Iron</keyword>
<keyword id="KW-0411">Iron-sulfur</keyword>
<keyword id="KW-0460">Magnesium</keyword>
<keyword id="KW-0479">Metal-binding</keyword>
<keyword id="KW-0547">Nucleotide-binding</keyword>
<keyword id="KW-0694">RNA-binding</keyword>
<keyword id="KW-0808">Transferase</keyword>
<keyword id="KW-0819">tRNA processing</keyword>
<keyword id="KW-0820">tRNA-binding</keyword>
<sequence>MSEKRVEKKLIHYVKKALNDYRMINTGDRVMVCLSGGKDSYTLLSLLNSIRIEGNYKFDIFAFVLDQSQPGWDDSALRGWLDDKKIPYEILTRDTYSIVKEKIPAGKTYCSLCSRLRRGIIYRYAEEQGFSKIALGHHRDDLIQTLLMSVFYNGQIRSMPPKLLSDNRRHVLIRPLAYCQERDIIKYAMEQQFPLIPCNLCGSQKNLMRQRVKRLISDLAKENPKVPSNMLRALSNIKPSQLMDHELWNFRELNVD</sequence>
<evidence type="ECO:0000255" key="1">
    <source>
        <dbReference type="HAMAP-Rule" id="MF_01850"/>
    </source>
</evidence>
<gene>
    <name evidence="1" type="primary">ttcA</name>
    <name type="ordered locus">COXBURSA331_A0868</name>
</gene>
<accession>A9NCM4</accession>
<reference key="1">
    <citation type="submission" date="2007-11" db="EMBL/GenBank/DDBJ databases">
        <title>Genome sequencing of phylogenetically and phenotypically diverse Coxiella burnetii isolates.</title>
        <authorList>
            <person name="Seshadri R."/>
            <person name="Samuel J.E."/>
        </authorList>
    </citation>
    <scope>NUCLEOTIDE SEQUENCE [LARGE SCALE GENOMIC DNA]</scope>
    <source>
        <strain>RSA 331 / Henzerling II</strain>
    </source>
</reference>
<name>TTCA_COXBR</name>
<protein>
    <recommendedName>
        <fullName evidence="1">tRNA-cytidine(32) 2-sulfurtransferase</fullName>
        <ecNumber evidence="1">2.8.1.-</ecNumber>
    </recommendedName>
    <alternativeName>
        <fullName evidence="1">Two-thiocytidine biosynthesis protein A</fullName>
    </alternativeName>
    <alternativeName>
        <fullName evidence="1">tRNA 2-thiocytidine biosynthesis protein TtcA</fullName>
    </alternativeName>
</protein>
<feature type="chain" id="PRO_0000348705" description="tRNA-cytidine(32) 2-sulfurtransferase">
    <location>
        <begin position="1"/>
        <end position="256"/>
    </location>
</feature>
<feature type="short sequence motif" description="PP-loop motif" evidence="1">
    <location>
        <begin position="35"/>
        <end position="40"/>
    </location>
</feature>
<feature type="binding site" evidence="1">
    <location>
        <position position="110"/>
    </location>
    <ligand>
        <name>[4Fe-4S] cluster</name>
        <dbReference type="ChEBI" id="CHEBI:49883"/>
    </ligand>
</feature>
<feature type="binding site" evidence="1">
    <location>
        <position position="113"/>
    </location>
    <ligand>
        <name>[4Fe-4S] cluster</name>
        <dbReference type="ChEBI" id="CHEBI:49883"/>
    </ligand>
</feature>
<feature type="binding site" evidence="1">
    <location>
        <position position="201"/>
    </location>
    <ligand>
        <name>[4Fe-4S] cluster</name>
        <dbReference type="ChEBI" id="CHEBI:49883"/>
    </ligand>
</feature>
<organism>
    <name type="scientific">Coxiella burnetii (strain RSA 331 / Henzerling II)</name>
    <dbReference type="NCBI Taxonomy" id="360115"/>
    <lineage>
        <taxon>Bacteria</taxon>
        <taxon>Pseudomonadati</taxon>
        <taxon>Pseudomonadota</taxon>
        <taxon>Gammaproteobacteria</taxon>
        <taxon>Legionellales</taxon>
        <taxon>Coxiellaceae</taxon>
        <taxon>Coxiella</taxon>
    </lineage>
</organism>
<dbReference type="EC" id="2.8.1.-" evidence="1"/>
<dbReference type="EMBL" id="CP000890">
    <property type="protein sequence ID" value="ABX77419.1"/>
    <property type="molecule type" value="Genomic_DNA"/>
</dbReference>
<dbReference type="SMR" id="A9NCM4"/>
<dbReference type="KEGG" id="cbs:COXBURSA331_A0868"/>
<dbReference type="HOGENOM" id="CLU_026481_0_0_6"/>
<dbReference type="GO" id="GO:0005737">
    <property type="term" value="C:cytoplasm"/>
    <property type="evidence" value="ECO:0007669"/>
    <property type="project" value="UniProtKB-SubCell"/>
</dbReference>
<dbReference type="GO" id="GO:0051539">
    <property type="term" value="F:4 iron, 4 sulfur cluster binding"/>
    <property type="evidence" value="ECO:0007669"/>
    <property type="project" value="UniProtKB-UniRule"/>
</dbReference>
<dbReference type="GO" id="GO:0005524">
    <property type="term" value="F:ATP binding"/>
    <property type="evidence" value="ECO:0007669"/>
    <property type="project" value="UniProtKB-UniRule"/>
</dbReference>
<dbReference type="GO" id="GO:0000287">
    <property type="term" value="F:magnesium ion binding"/>
    <property type="evidence" value="ECO:0007669"/>
    <property type="project" value="UniProtKB-UniRule"/>
</dbReference>
<dbReference type="GO" id="GO:0016783">
    <property type="term" value="F:sulfurtransferase activity"/>
    <property type="evidence" value="ECO:0007669"/>
    <property type="project" value="UniProtKB-UniRule"/>
</dbReference>
<dbReference type="GO" id="GO:0000049">
    <property type="term" value="F:tRNA binding"/>
    <property type="evidence" value="ECO:0007669"/>
    <property type="project" value="UniProtKB-KW"/>
</dbReference>
<dbReference type="GO" id="GO:0034227">
    <property type="term" value="P:tRNA thio-modification"/>
    <property type="evidence" value="ECO:0007669"/>
    <property type="project" value="UniProtKB-UniRule"/>
</dbReference>
<dbReference type="CDD" id="cd24138">
    <property type="entry name" value="TtcA-like"/>
    <property type="match status" value="1"/>
</dbReference>
<dbReference type="Gene3D" id="3.40.50.620">
    <property type="entry name" value="HUPs"/>
    <property type="match status" value="1"/>
</dbReference>
<dbReference type="HAMAP" id="MF_01850">
    <property type="entry name" value="TtcA"/>
    <property type="match status" value="1"/>
</dbReference>
<dbReference type="InterPro" id="IPR014729">
    <property type="entry name" value="Rossmann-like_a/b/a_fold"/>
</dbReference>
<dbReference type="InterPro" id="IPR011063">
    <property type="entry name" value="TilS/TtcA_N"/>
</dbReference>
<dbReference type="InterPro" id="IPR012089">
    <property type="entry name" value="tRNA_Cyd_32_2_STrfase"/>
</dbReference>
<dbReference type="InterPro" id="IPR035107">
    <property type="entry name" value="tRNA_thiolation_TtcA_Ctu1"/>
</dbReference>
<dbReference type="NCBIfam" id="NF007972">
    <property type="entry name" value="PRK10696.1"/>
    <property type="match status" value="1"/>
</dbReference>
<dbReference type="PANTHER" id="PTHR43686:SF1">
    <property type="entry name" value="AMINOTRAN_5 DOMAIN-CONTAINING PROTEIN"/>
    <property type="match status" value="1"/>
</dbReference>
<dbReference type="PANTHER" id="PTHR43686">
    <property type="entry name" value="SULFURTRANSFERASE-RELATED"/>
    <property type="match status" value="1"/>
</dbReference>
<dbReference type="Pfam" id="PF01171">
    <property type="entry name" value="ATP_bind_3"/>
    <property type="match status" value="1"/>
</dbReference>
<dbReference type="PIRSF" id="PIRSF004976">
    <property type="entry name" value="ATPase_YdaO"/>
    <property type="match status" value="1"/>
</dbReference>
<dbReference type="SUPFAM" id="SSF52402">
    <property type="entry name" value="Adenine nucleotide alpha hydrolases-like"/>
    <property type="match status" value="1"/>
</dbReference>
<comment type="function">
    <text evidence="1">Catalyzes the ATP-dependent 2-thiolation of cytidine in position 32 of tRNA, to form 2-thiocytidine (s(2)C32). The sulfur atoms are provided by the cysteine/cysteine desulfurase (IscS) system.</text>
</comment>
<comment type="catalytic activity">
    <reaction evidence="1">
        <text>cytidine(32) in tRNA + S-sulfanyl-L-cysteinyl-[cysteine desulfurase] + AH2 + ATP = 2-thiocytidine(32) in tRNA + L-cysteinyl-[cysteine desulfurase] + A + AMP + diphosphate + H(+)</text>
        <dbReference type="Rhea" id="RHEA:57048"/>
        <dbReference type="Rhea" id="RHEA-COMP:10288"/>
        <dbReference type="Rhea" id="RHEA-COMP:12157"/>
        <dbReference type="Rhea" id="RHEA-COMP:12158"/>
        <dbReference type="Rhea" id="RHEA-COMP:14821"/>
        <dbReference type="ChEBI" id="CHEBI:13193"/>
        <dbReference type="ChEBI" id="CHEBI:15378"/>
        <dbReference type="ChEBI" id="CHEBI:17499"/>
        <dbReference type="ChEBI" id="CHEBI:29950"/>
        <dbReference type="ChEBI" id="CHEBI:30616"/>
        <dbReference type="ChEBI" id="CHEBI:33019"/>
        <dbReference type="ChEBI" id="CHEBI:61963"/>
        <dbReference type="ChEBI" id="CHEBI:82748"/>
        <dbReference type="ChEBI" id="CHEBI:141453"/>
        <dbReference type="ChEBI" id="CHEBI:456215"/>
    </reaction>
    <physiologicalReaction direction="left-to-right" evidence="1">
        <dbReference type="Rhea" id="RHEA:57049"/>
    </physiologicalReaction>
</comment>
<comment type="cofactor">
    <cofactor evidence="1">
        <name>Mg(2+)</name>
        <dbReference type="ChEBI" id="CHEBI:18420"/>
    </cofactor>
</comment>
<comment type="cofactor">
    <cofactor evidence="1">
        <name>[4Fe-4S] cluster</name>
        <dbReference type="ChEBI" id="CHEBI:49883"/>
    </cofactor>
    <text evidence="1">Binds 1 [4Fe-4S] cluster per subunit. The cluster is chelated by three Cys residues, the fourth Fe has a free coordination site that may bind a sulfur atom transferred from the persulfide of IscS.</text>
</comment>
<comment type="pathway">
    <text evidence="1">tRNA modification.</text>
</comment>
<comment type="subunit">
    <text evidence="1">Homodimer.</text>
</comment>
<comment type="subcellular location">
    <subcellularLocation>
        <location evidence="1">Cytoplasm</location>
    </subcellularLocation>
</comment>
<comment type="miscellaneous">
    <text evidence="1">The thiolation reaction likely consists of two steps: a first activation step by ATP to form an adenylated intermediate of the target base of tRNA, and a second nucleophilic substitution step of the sulfur (S) atom supplied by the hydrosulfide attached to the Fe-S cluster.</text>
</comment>
<comment type="similarity">
    <text evidence="1">Belongs to the TtcA family.</text>
</comment>